<organism>
    <name type="scientific">Bos taurus</name>
    <name type="common">Bovine</name>
    <dbReference type="NCBI Taxonomy" id="9913"/>
    <lineage>
        <taxon>Eukaryota</taxon>
        <taxon>Metazoa</taxon>
        <taxon>Chordata</taxon>
        <taxon>Craniata</taxon>
        <taxon>Vertebrata</taxon>
        <taxon>Euteleostomi</taxon>
        <taxon>Mammalia</taxon>
        <taxon>Eutheria</taxon>
        <taxon>Laurasiatheria</taxon>
        <taxon>Artiodactyla</taxon>
        <taxon>Ruminantia</taxon>
        <taxon>Pecora</taxon>
        <taxon>Bovidae</taxon>
        <taxon>Bovinae</taxon>
        <taxon>Bos</taxon>
    </lineage>
</organism>
<accession>Q2KIB5</accession>
<reference key="1">
    <citation type="submission" date="2006-01" db="EMBL/GenBank/DDBJ databases">
        <authorList>
            <consortium name="NIH - Mammalian Gene Collection (MGC) project"/>
        </authorList>
    </citation>
    <scope>NUCLEOTIDE SEQUENCE [LARGE SCALE MRNA]</scope>
    <source>
        <strain>Hereford</strain>
        <tissue>Hypothalamus</tissue>
    </source>
</reference>
<reference evidence="5" key="2">
    <citation type="journal article" date="2020" name="Nat. Commun.">
        <title>Cryo-EM structures of intact V-ATPase from bovine brain.</title>
        <authorList>
            <person name="Wang R."/>
            <person name="Long T."/>
            <person name="Hassan A."/>
            <person name="Wang J."/>
            <person name="Sun Y."/>
            <person name="Xie X.S."/>
            <person name="Li X."/>
        </authorList>
    </citation>
    <scope>STRUCTURE BY ELECTRON MICROSCOPY (3.37 ANGSTROMS)</scope>
    <scope>FUNCTION</scope>
    <scope>IDENTIFICATION IN THE V-ATPASE COMPLEX</scope>
    <scope>SUBCELLULAR LOCATION</scope>
    <scope>IDENTIFICATION BY MASS SPECTROMETRY</scope>
    <scope>TISSUE SPECIFICITY</scope>
</reference>
<evidence type="ECO:0000250" key="1">
    <source>
        <dbReference type="UniProtKB" id="Q5EB76"/>
    </source>
</evidence>
<evidence type="ECO:0000255" key="2"/>
<evidence type="ECO:0000269" key="3">
    <source>
    </source>
</evidence>
<evidence type="ECO:0000305" key="4"/>
<evidence type="ECO:0007744" key="5">
    <source>
        <dbReference type="PDB" id="6XBW"/>
    </source>
</evidence>
<evidence type="ECO:0007829" key="6">
    <source>
        <dbReference type="PDB" id="6XBW"/>
    </source>
</evidence>
<dbReference type="EMBL" id="BC112699">
    <property type="protein sequence ID" value="AAI12700.1"/>
    <property type="molecule type" value="mRNA"/>
</dbReference>
<dbReference type="RefSeq" id="NP_001091043.1">
    <property type="nucleotide sequence ID" value="NM_001097574.2"/>
</dbReference>
<dbReference type="PDB" id="6XBW">
    <property type="method" value="EM"/>
    <property type="resolution" value="3.37 A"/>
    <property type="chains" value="e=1-81"/>
</dbReference>
<dbReference type="PDB" id="7KHR">
    <property type="method" value="EM"/>
    <property type="resolution" value="3.62 A"/>
    <property type="chains" value="e=1-81"/>
</dbReference>
<dbReference type="PDBsum" id="6XBW"/>
<dbReference type="PDBsum" id="7KHR"/>
<dbReference type="EMDB" id="EMD-22121"/>
<dbReference type="EMDB" id="EMD-22880"/>
<dbReference type="SMR" id="Q2KIB5"/>
<dbReference type="FunCoup" id="Q2KIB5">
    <property type="interactions" value="1256"/>
</dbReference>
<dbReference type="STRING" id="9913.ENSBTAP00000007912"/>
<dbReference type="GlyCosmos" id="Q2KIB5">
    <property type="glycosylation" value="1 site, No reported glycans"/>
</dbReference>
<dbReference type="GlyGen" id="Q2KIB5">
    <property type="glycosylation" value="1 site"/>
</dbReference>
<dbReference type="PaxDb" id="9913-ENSBTAP00000007912"/>
<dbReference type="GeneID" id="505224"/>
<dbReference type="KEGG" id="bta:505224"/>
<dbReference type="CTD" id="155066"/>
<dbReference type="eggNOG" id="KOG3500">
    <property type="taxonomic scope" value="Eukaryota"/>
</dbReference>
<dbReference type="HOGENOM" id="CLU_170555_0_0_1"/>
<dbReference type="InParanoid" id="Q2KIB5"/>
<dbReference type="OrthoDB" id="1508846at2759"/>
<dbReference type="TreeFam" id="TF300290"/>
<dbReference type="Proteomes" id="UP000009136">
    <property type="component" value="Unplaced"/>
</dbReference>
<dbReference type="GO" id="GO:0030665">
    <property type="term" value="C:clathrin-coated vesicle membrane"/>
    <property type="evidence" value="ECO:0007669"/>
    <property type="project" value="UniProtKB-SubCell"/>
</dbReference>
<dbReference type="GO" id="GO:0030672">
    <property type="term" value="C:synaptic vesicle membrane"/>
    <property type="evidence" value="ECO:0007669"/>
    <property type="project" value="UniProtKB-SubCell"/>
</dbReference>
<dbReference type="GO" id="GO:0000220">
    <property type="term" value="C:vacuolar proton-transporting V-type ATPase, V0 domain"/>
    <property type="evidence" value="ECO:0000314"/>
    <property type="project" value="UniProtKB"/>
</dbReference>
<dbReference type="GO" id="GO:0046961">
    <property type="term" value="F:proton-transporting ATPase activity, rotational mechanism"/>
    <property type="evidence" value="ECO:0007669"/>
    <property type="project" value="InterPro"/>
</dbReference>
<dbReference type="GO" id="GO:0045851">
    <property type="term" value="P:pH reduction"/>
    <property type="evidence" value="ECO:0000305"/>
    <property type="project" value="UniProtKB"/>
</dbReference>
<dbReference type="GO" id="GO:1902600">
    <property type="term" value="P:proton transmembrane transport"/>
    <property type="evidence" value="ECO:0000305"/>
    <property type="project" value="UniProtKB"/>
</dbReference>
<dbReference type="GO" id="GO:0055085">
    <property type="term" value="P:transmembrane transport"/>
    <property type="evidence" value="ECO:0000318"/>
    <property type="project" value="GO_Central"/>
</dbReference>
<dbReference type="InterPro" id="IPR008389">
    <property type="entry name" value="ATPase_V0-cplx_e1/e2_su"/>
</dbReference>
<dbReference type="InterPro" id="IPR017385">
    <property type="entry name" value="ATPase_V0-cplx_e1/e2_su_met"/>
</dbReference>
<dbReference type="PANTHER" id="PTHR12263:SF2">
    <property type="entry name" value="V-TYPE PROTON ATPASE SUBUNIT E 2"/>
    <property type="match status" value="1"/>
</dbReference>
<dbReference type="PANTHER" id="PTHR12263">
    <property type="entry name" value="VACUOLAR ATP SYNTHASE SUBUNIT H"/>
    <property type="match status" value="1"/>
</dbReference>
<dbReference type="Pfam" id="PF05493">
    <property type="entry name" value="ATP_synt_H"/>
    <property type="match status" value="1"/>
</dbReference>
<dbReference type="PIRSF" id="PIRSF038097">
    <property type="entry name" value="V-ATP_synth_e1/e2"/>
    <property type="match status" value="1"/>
</dbReference>
<feature type="chain" id="PRO_0000270198" description="V-type proton ATPase subunit e 2">
    <location>
        <begin position="1"/>
        <end position="81"/>
    </location>
</feature>
<feature type="topological domain" description="Lumenal" evidence="4">
    <location>
        <begin position="1"/>
        <end position="7"/>
    </location>
</feature>
<feature type="transmembrane region" description="Helical" evidence="2">
    <location>
        <begin position="8"/>
        <end position="28"/>
    </location>
</feature>
<feature type="topological domain" description="Cytoplasmic" evidence="4">
    <location>
        <begin position="29"/>
        <end position="35"/>
    </location>
</feature>
<feature type="transmembrane region" description="Helical" evidence="2">
    <location>
        <begin position="36"/>
        <end position="56"/>
    </location>
</feature>
<feature type="topological domain" description="Lumenal" evidence="4">
    <location>
        <begin position="57"/>
        <end position="81"/>
    </location>
</feature>
<feature type="glycosylation site" description="N-linked (GlcNAc...) asparagine" evidence="2">
    <location>
        <position position="70"/>
    </location>
</feature>
<feature type="helix" evidence="6">
    <location>
        <begin position="9"/>
        <end position="16"/>
    </location>
</feature>
<feature type="turn" evidence="6">
    <location>
        <begin position="17"/>
        <end position="22"/>
    </location>
</feature>
<feature type="turn" evidence="6">
    <location>
        <begin position="24"/>
        <end position="26"/>
    </location>
</feature>
<feature type="helix" evidence="6">
    <location>
        <begin position="34"/>
        <end position="56"/>
    </location>
</feature>
<feature type="turn" evidence="6">
    <location>
        <begin position="57"/>
        <end position="59"/>
    </location>
</feature>
<feature type="helix" evidence="6">
    <location>
        <begin position="70"/>
        <end position="77"/>
    </location>
</feature>
<name>VA0E2_BOVIN</name>
<sequence length="81" mass="9184">MTAHSFALPVVIFTTFWGLIGIAGPWFVPKGPNRGVIITMLVATAVCCYLFWLIAILAQLNPLFGPQLKNETIWYVRFLWE</sequence>
<gene>
    <name type="primary">ATP6V0E2</name>
</gene>
<keyword id="KW-0002">3D-structure</keyword>
<keyword id="KW-0968">Cytoplasmic vesicle</keyword>
<keyword id="KW-0325">Glycoprotein</keyword>
<keyword id="KW-0375">Hydrogen ion transport</keyword>
<keyword id="KW-0406">Ion transport</keyword>
<keyword id="KW-0472">Membrane</keyword>
<keyword id="KW-1185">Reference proteome</keyword>
<keyword id="KW-0770">Synapse</keyword>
<keyword id="KW-0812">Transmembrane</keyword>
<keyword id="KW-1133">Transmembrane helix</keyword>
<keyword id="KW-0813">Transport</keyword>
<protein>
    <recommendedName>
        <fullName>V-type proton ATPase subunit e 2</fullName>
        <shortName>V-ATPase subunit e 2</shortName>
    </recommendedName>
    <alternativeName>
        <fullName>Vacuolar proton pump subunit e 2</fullName>
    </alternativeName>
</protein>
<proteinExistence type="evidence at protein level"/>
<comment type="function">
    <text evidence="3">Subunit of the V0 complex of vacuolar(H+)-ATPase (V-ATPase), a multisubunit enzyme composed of a peripheral complex (V1) that hydrolyzes ATP and a membrane integral complex (V0) that translocates protons (PubMed:32764564). V-ATPase is responsible for acidifying and maintaining the pH of intracellular compartments and in some cell types, is targeted to the plasma membrane, where it is responsible for acidifying the extracellular environment (PubMed:32764564).</text>
</comment>
<comment type="subunit">
    <text evidence="3">V-ATPase is a heteromultimeric enzyme made up of two complexes: the ATP-hydrolytic V1 complex and the proton translocation V0 complex (PubMed:32764564). The V1 complex consists of three catalytic AB heterodimers that form a heterohexamer, three peripheral stalks each consisting of EG heterodimers, one central rotor including subunits D and F, and the regulatory subunits C and H (PubMed:32764564). The proton translocation complex V0 consists of the proton transport subunit a, a ring of proteolipid subunits c9c'', rotary subunit d, subunits e and f, and the accessory subunits ATP6AP1/Ac45 and ATP6AP2/PRR (PubMed:32764564).</text>
</comment>
<comment type="subcellular location">
    <subcellularLocation>
        <location evidence="4">Membrane</location>
        <topology evidence="2">Multi-pass membrane protein</topology>
    </subcellularLocation>
    <subcellularLocation>
        <location evidence="3">Cytoplasmic vesicle</location>
        <location evidence="3">Clathrin-coated vesicle membrane</location>
        <topology evidence="2">Multi-pass membrane protein</topology>
    </subcellularLocation>
    <subcellularLocation>
        <location evidence="1">Cytoplasmic vesicle</location>
        <location evidence="1">Secretory vesicle</location>
        <location evidence="1">Synaptic vesicle membrane</location>
        <topology evidence="2">Multi-pass membrane protein</topology>
    </subcellularLocation>
</comment>
<comment type="tissue specificity">
    <text evidence="3">Expressed in brain (at protein level).</text>
</comment>
<comment type="similarity">
    <text evidence="4">Belongs to the V-ATPase e1/e2 subunit family.</text>
</comment>